<accession>Q2GG30</accession>
<evidence type="ECO:0000255" key="1">
    <source>
        <dbReference type="HAMAP-Rule" id="MF_00279"/>
    </source>
</evidence>
<feature type="chain" id="PRO_1000022372" description="Pyridoxine 5'-phosphate synthase">
    <location>
        <begin position="1"/>
        <end position="239"/>
    </location>
</feature>
<feature type="active site" description="Proton acceptor" evidence="1">
    <location>
        <position position="45"/>
    </location>
</feature>
<feature type="active site" description="Proton acceptor" evidence="1">
    <location>
        <position position="72"/>
    </location>
</feature>
<feature type="active site" description="Proton donor" evidence="1">
    <location>
        <position position="189"/>
    </location>
</feature>
<feature type="binding site" evidence="1">
    <location>
        <position position="9"/>
    </location>
    <ligand>
        <name>3-amino-2-oxopropyl phosphate</name>
        <dbReference type="ChEBI" id="CHEBI:57279"/>
    </ligand>
</feature>
<feature type="binding site" evidence="1">
    <location>
        <begin position="11"/>
        <end position="12"/>
    </location>
    <ligand>
        <name>1-deoxy-D-xylulose 5-phosphate</name>
        <dbReference type="ChEBI" id="CHEBI:57792"/>
    </ligand>
</feature>
<feature type="binding site" evidence="1">
    <location>
        <position position="20"/>
    </location>
    <ligand>
        <name>3-amino-2-oxopropyl phosphate</name>
        <dbReference type="ChEBI" id="CHEBI:57279"/>
    </ligand>
</feature>
<feature type="binding site" evidence="1">
    <location>
        <position position="47"/>
    </location>
    <ligand>
        <name>1-deoxy-D-xylulose 5-phosphate</name>
        <dbReference type="ChEBI" id="CHEBI:57792"/>
    </ligand>
</feature>
<feature type="binding site" evidence="1">
    <location>
        <position position="52"/>
    </location>
    <ligand>
        <name>1-deoxy-D-xylulose 5-phosphate</name>
        <dbReference type="ChEBI" id="CHEBI:57792"/>
    </ligand>
</feature>
<feature type="binding site" evidence="1">
    <location>
        <position position="102"/>
    </location>
    <ligand>
        <name>1-deoxy-D-xylulose 5-phosphate</name>
        <dbReference type="ChEBI" id="CHEBI:57792"/>
    </ligand>
</feature>
<feature type="binding site" evidence="1">
    <location>
        <position position="190"/>
    </location>
    <ligand>
        <name>3-amino-2-oxopropyl phosphate</name>
        <dbReference type="ChEBI" id="CHEBI:57279"/>
    </ligand>
</feature>
<feature type="binding site" evidence="1">
    <location>
        <begin position="211"/>
        <end position="212"/>
    </location>
    <ligand>
        <name>3-amino-2-oxopropyl phosphate</name>
        <dbReference type="ChEBI" id="CHEBI:57279"/>
    </ligand>
</feature>
<feature type="site" description="Transition state stabilizer" evidence="1">
    <location>
        <position position="153"/>
    </location>
</feature>
<name>PDXJ_EHRCR</name>
<proteinExistence type="inferred from homology"/>
<protein>
    <recommendedName>
        <fullName evidence="1">Pyridoxine 5'-phosphate synthase</fullName>
        <shortName evidence="1">PNP synthase</shortName>
        <ecNumber evidence="1">2.6.99.2</ecNumber>
    </recommendedName>
</protein>
<gene>
    <name evidence="1" type="primary">pdxJ</name>
    <name type="ordered locus">ECH_0805</name>
</gene>
<dbReference type="EC" id="2.6.99.2" evidence="1"/>
<dbReference type="EMBL" id="CP000236">
    <property type="protein sequence ID" value="ABD44897.1"/>
    <property type="molecule type" value="Genomic_DNA"/>
</dbReference>
<dbReference type="RefSeq" id="WP_006009796.1">
    <property type="nucleotide sequence ID" value="NC_007799.1"/>
</dbReference>
<dbReference type="SMR" id="Q2GG30"/>
<dbReference type="STRING" id="205920.ECH_0805"/>
<dbReference type="KEGG" id="ech:ECH_0805"/>
<dbReference type="eggNOG" id="COG0854">
    <property type="taxonomic scope" value="Bacteria"/>
</dbReference>
<dbReference type="HOGENOM" id="CLU_074563_0_0_5"/>
<dbReference type="OrthoDB" id="9806590at2"/>
<dbReference type="UniPathway" id="UPA00244">
    <property type="reaction ID" value="UER00313"/>
</dbReference>
<dbReference type="Proteomes" id="UP000008320">
    <property type="component" value="Chromosome"/>
</dbReference>
<dbReference type="GO" id="GO:0005829">
    <property type="term" value="C:cytosol"/>
    <property type="evidence" value="ECO:0007669"/>
    <property type="project" value="TreeGrafter"/>
</dbReference>
<dbReference type="GO" id="GO:0033856">
    <property type="term" value="F:pyridoxine 5'-phosphate synthase activity"/>
    <property type="evidence" value="ECO:0007669"/>
    <property type="project" value="UniProtKB-EC"/>
</dbReference>
<dbReference type="GO" id="GO:0008615">
    <property type="term" value="P:pyridoxine biosynthetic process"/>
    <property type="evidence" value="ECO:0007669"/>
    <property type="project" value="UniProtKB-UniRule"/>
</dbReference>
<dbReference type="CDD" id="cd00003">
    <property type="entry name" value="PNPsynthase"/>
    <property type="match status" value="1"/>
</dbReference>
<dbReference type="Gene3D" id="3.20.20.70">
    <property type="entry name" value="Aldolase class I"/>
    <property type="match status" value="1"/>
</dbReference>
<dbReference type="HAMAP" id="MF_00279">
    <property type="entry name" value="PdxJ"/>
    <property type="match status" value="1"/>
</dbReference>
<dbReference type="InterPro" id="IPR013785">
    <property type="entry name" value="Aldolase_TIM"/>
</dbReference>
<dbReference type="InterPro" id="IPR004569">
    <property type="entry name" value="PyrdxlP_synth_PdxJ"/>
</dbReference>
<dbReference type="InterPro" id="IPR036130">
    <property type="entry name" value="Pyridoxine-5'_phos_synth"/>
</dbReference>
<dbReference type="NCBIfam" id="TIGR00559">
    <property type="entry name" value="pdxJ"/>
    <property type="match status" value="1"/>
</dbReference>
<dbReference type="NCBIfam" id="NF003625">
    <property type="entry name" value="PRK05265.1-3"/>
    <property type="match status" value="1"/>
</dbReference>
<dbReference type="NCBIfam" id="NF003627">
    <property type="entry name" value="PRK05265.1-5"/>
    <property type="match status" value="1"/>
</dbReference>
<dbReference type="PANTHER" id="PTHR30456">
    <property type="entry name" value="PYRIDOXINE 5'-PHOSPHATE SYNTHASE"/>
    <property type="match status" value="1"/>
</dbReference>
<dbReference type="PANTHER" id="PTHR30456:SF0">
    <property type="entry name" value="PYRIDOXINE 5'-PHOSPHATE SYNTHASE"/>
    <property type="match status" value="1"/>
</dbReference>
<dbReference type="Pfam" id="PF03740">
    <property type="entry name" value="PdxJ"/>
    <property type="match status" value="1"/>
</dbReference>
<dbReference type="SUPFAM" id="SSF63892">
    <property type="entry name" value="Pyridoxine 5'-phosphate synthase"/>
    <property type="match status" value="1"/>
</dbReference>
<keyword id="KW-0963">Cytoplasm</keyword>
<keyword id="KW-0664">Pyridoxine biosynthesis</keyword>
<keyword id="KW-1185">Reference proteome</keyword>
<keyword id="KW-0808">Transferase</keyword>
<sequence length="239" mass="26507">MSDVALGVNIDHVATLRNARNVDYPDIVEVANIAVSNGADFITVHLREDRRHIKDDDVFRLKNSLKVPLNLEIAPTDEMLSIAIKVRPKCVCLVPEKRQELTTEGGLDVKRAFSYLISFIEKLHTYNIDVTLFIEPDVDQIDQAKKLSADNVELHTGKYCNNTTQSELSQVIKAAEYCYQRNIGCHAGHGLNYQSAAIIAKVPYISALNIGHFLICESVLHGIGTSVHKMKKAIASAPN</sequence>
<organism>
    <name type="scientific">Ehrlichia chaffeensis (strain ATCC CRL-10679 / Arkansas)</name>
    <dbReference type="NCBI Taxonomy" id="205920"/>
    <lineage>
        <taxon>Bacteria</taxon>
        <taxon>Pseudomonadati</taxon>
        <taxon>Pseudomonadota</taxon>
        <taxon>Alphaproteobacteria</taxon>
        <taxon>Rickettsiales</taxon>
        <taxon>Anaplasmataceae</taxon>
        <taxon>Ehrlichia</taxon>
    </lineage>
</organism>
<reference key="1">
    <citation type="journal article" date="2006" name="PLoS Genet.">
        <title>Comparative genomics of emerging human ehrlichiosis agents.</title>
        <authorList>
            <person name="Dunning Hotopp J.C."/>
            <person name="Lin M."/>
            <person name="Madupu R."/>
            <person name="Crabtree J."/>
            <person name="Angiuoli S.V."/>
            <person name="Eisen J.A."/>
            <person name="Seshadri R."/>
            <person name="Ren Q."/>
            <person name="Wu M."/>
            <person name="Utterback T.R."/>
            <person name="Smith S."/>
            <person name="Lewis M."/>
            <person name="Khouri H."/>
            <person name="Zhang C."/>
            <person name="Niu H."/>
            <person name="Lin Q."/>
            <person name="Ohashi N."/>
            <person name="Zhi N."/>
            <person name="Nelson W.C."/>
            <person name="Brinkac L.M."/>
            <person name="Dodson R.J."/>
            <person name="Rosovitz M.J."/>
            <person name="Sundaram J.P."/>
            <person name="Daugherty S.C."/>
            <person name="Davidsen T."/>
            <person name="Durkin A.S."/>
            <person name="Gwinn M.L."/>
            <person name="Haft D.H."/>
            <person name="Selengut J.D."/>
            <person name="Sullivan S.A."/>
            <person name="Zafar N."/>
            <person name="Zhou L."/>
            <person name="Benahmed F."/>
            <person name="Forberger H."/>
            <person name="Halpin R."/>
            <person name="Mulligan S."/>
            <person name="Robinson J."/>
            <person name="White O."/>
            <person name="Rikihisa Y."/>
            <person name="Tettelin H."/>
        </authorList>
    </citation>
    <scope>NUCLEOTIDE SEQUENCE [LARGE SCALE GENOMIC DNA]</scope>
    <source>
        <strain>ATCC CRL-10679 / Arkansas</strain>
    </source>
</reference>
<comment type="function">
    <text evidence="1">Catalyzes the complicated ring closure reaction between the two acyclic compounds 1-deoxy-D-xylulose-5-phosphate (DXP) and 3-amino-2-oxopropyl phosphate (1-amino-acetone-3-phosphate or AAP) to form pyridoxine 5'-phosphate (PNP) and inorganic phosphate.</text>
</comment>
<comment type="catalytic activity">
    <reaction evidence="1">
        <text>3-amino-2-oxopropyl phosphate + 1-deoxy-D-xylulose 5-phosphate = pyridoxine 5'-phosphate + phosphate + 2 H2O + H(+)</text>
        <dbReference type="Rhea" id="RHEA:15265"/>
        <dbReference type="ChEBI" id="CHEBI:15377"/>
        <dbReference type="ChEBI" id="CHEBI:15378"/>
        <dbReference type="ChEBI" id="CHEBI:43474"/>
        <dbReference type="ChEBI" id="CHEBI:57279"/>
        <dbReference type="ChEBI" id="CHEBI:57792"/>
        <dbReference type="ChEBI" id="CHEBI:58589"/>
        <dbReference type="EC" id="2.6.99.2"/>
    </reaction>
</comment>
<comment type="pathway">
    <text evidence="1">Cofactor biosynthesis; pyridoxine 5'-phosphate biosynthesis; pyridoxine 5'-phosphate from D-erythrose 4-phosphate: step 5/5.</text>
</comment>
<comment type="subunit">
    <text evidence="1">Homooctamer; tetramer of dimers.</text>
</comment>
<comment type="subcellular location">
    <subcellularLocation>
        <location evidence="1">Cytoplasm</location>
    </subcellularLocation>
</comment>
<comment type="similarity">
    <text evidence="1">Belongs to the PNP synthase family.</text>
</comment>